<comment type="function">
    <text>Receptor for GRF, coupled to G proteins which activate adenylyl cyclase. Stimulates somatotroph cell growth, growth hormone gene transcription and growth hormone secretion.</text>
</comment>
<comment type="subcellular location">
    <subcellularLocation>
        <location>Cell membrane</location>
        <topology>Multi-pass membrane protein</topology>
    </subcellularLocation>
</comment>
<comment type="tissue specificity">
    <text>Pituitary gland.</text>
</comment>
<comment type="disease">
    <text>Little (lit) mice exhibits anterior pituitary hypoplasia.</text>
</comment>
<comment type="similarity">
    <text evidence="4">Belongs to the G-protein coupled receptor 2 family.</text>
</comment>
<accession>P32082</accession>
<accession>Q0VB62</accession>
<keyword id="KW-1003">Cell membrane</keyword>
<keyword id="KW-0225">Disease variant</keyword>
<keyword id="KW-1015">Disulfide bond</keyword>
<keyword id="KW-0297">G-protein coupled receptor</keyword>
<keyword id="KW-0325">Glycoprotein</keyword>
<keyword id="KW-0472">Membrane</keyword>
<keyword id="KW-0675">Receptor</keyword>
<keyword id="KW-1185">Reference proteome</keyword>
<keyword id="KW-0732">Signal</keyword>
<keyword id="KW-0807">Transducer</keyword>
<keyword id="KW-0812">Transmembrane</keyword>
<keyword id="KW-1133">Transmembrane helix</keyword>
<dbReference type="EMBL" id="L07379">
    <property type="status" value="NOT_ANNOTATED_CDS"/>
    <property type="molecule type" value="mRNA"/>
</dbReference>
<dbReference type="EMBL" id="BC120748">
    <property type="protein sequence ID" value="AAI20749.1"/>
    <property type="molecule type" value="mRNA"/>
</dbReference>
<dbReference type="EMBL" id="BC120774">
    <property type="protein sequence ID" value="AAI20775.1"/>
    <property type="molecule type" value="mRNA"/>
</dbReference>
<dbReference type="CCDS" id="CCDS20165.1"/>
<dbReference type="PIR" id="S29753">
    <property type="entry name" value="S29753"/>
</dbReference>
<dbReference type="RefSeq" id="NP_001003685.2">
    <property type="nucleotide sequence ID" value="NM_001003685.3"/>
</dbReference>
<dbReference type="SMR" id="P32082"/>
<dbReference type="BioGRID" id="199917">
    <property type="interactions" value="1"/>
</dbReference>
<dbReference type="FunCoup" id="P32082">
    <property type="interactions" value="401"/>
</dbReference>
<dbReference type="STRING" id="10090.ENSMUSP00000068120"/>
<dbReference type="GlyCosmos" id="P32082">
    <property type="glycosylation" value="2 sites, No reported glycans"/>
</dbReference>
<dbReference type="GlyGen" id="P32082">
    <property type="glycosylation" value="2 sites"/>
</dbReference>
<dbReference type="iPTMnet" id="P32082"/>
<dbReference type="PhosphoSitePlus" id="P32082"/>
<dbReference type="PaxDb" id="10090-ENSMUSP00000068120"/>
<dbReference type="Antibodypedia" id="3360">
    <property type="antibodies" value="305 antibodies from 31 providers"/>
</dbReference>
<dbReference type="DNASU" id="14602"/>
<dbReference type="Ensembl" id="ENSMUST00000063578.6">
    <property type="protein sequence ID" value="ENSMUSP00000068120.4"/>
    <property type="gene ID" value="ENSMUSG00000004654.7"/>
</dbReference>
<dbReference type="GeneID" id="14602"/>
<dbReference type="KEGG" id="mmu:14602"/>
<dbReference type="UCSC" id="uc009cas.2">
    <property type="organism name" value="mouse"/>
</dbReference>
<dbReference type="AGR" id="MGI:95710"/>
<dbReference type="CTD" id="2692"/>
<dbReference type="MGI" id="MGI:95710">
    <property type="gene designation" value="Ghrhr"/>
</dbReference>
<dbReference type="VEuPathDB" id="HostDB:ENSMUSG00000004654"/>
<dbReference type="eggNOG" id="KOG4564">
    <property type="taxonomic scope" value="Eukaryota"/>
</dbReference>
<dbReference type="GeneTree" id="ENSGT00940000159858"/>
<dbReference type="HOGENOM" id="CLU_002753_4_4_1"/>
<dbReference type="InParanoid" id="P32082"/>
<dbReference type="OMA" id="RAWGACI"/>
<dbReference type="OrthoDB" id="5967113at2759"/>
<dbReference type="PhylomeDB" id="P32082"/>
<dbReference type="TreeFam" id="TF315710"/>
<dbReference type="Reactome" id="R-MMU-418555">
    <property type="pathway name" value="G alpha (s) signalling events"/>
</dbReference>
<dbReference type="Reactome" id="R-MMU-420092">
    <property type="pathway name" value="Glucagon-type ligand receptors"/>
</dbReference>
<dbReference type="BioGRID-ORCS" id="14602">
    <property type="hits" value="2 hits in 79 CRISPR screens"/>
</dbReference>
<dbReference type="PRO" id="PR:P32082"/>
<dbReference type="Proteomes" id="UP000000589">
    <property type="component" value="Chromosome 6"/>
</dbReference>
<dbReference type="RNAct" id="P32082">
    <property type="molecule type" value="protein"/>
</dbReference>
<dbReference type="Bgee" id="ENSMUSG00000004654">
    <property type="expression patterns" value="Expressed in pituitary gland and 19 other cell types or tissues"/>
</dbReference>
<dbReference type="ExpressionAtlas" id="P32082">
    <property type="expression patterns" value="baseline and differential"/>
</dbReference>
<dbReference type="GO" id="GO:0009986">
    <property type="term" value="C:cell surface"/>
    <property type="evidence" value="ECO:0007669"/>
    <property type="project" value="Ensembl"/>
</dbReference>
<dbReference type="GO" id="GO:0016020">
    <property type="term" value="C:membrane"/>
    <property type="evidence" value="ECO:0000314"/>
    <property type="project" value="MGI"/>
</dbReference>
<dbReference type="GO" id="GO:0005637">
    <property type="term" value="C:nuclear inner membrane"/>
    <property type="evidence" value="ECO:0007669"/>
    <property type="project" value="Ensembl"/>
</dbReference>
<dbReference type="GO" id="GO:0016363">
    <property type="term" value="C:nuclear matrix"/>
    <property type="evidence" value="ECO:0007669"/>
    <property type="project" value="Ensembl"/>
</dbReference>
<dbReference type="GO" id="GO:0005640">
    <property type="term" value="C:nuclear outer membrane"/>
    <property type="evidence" value="ECO:0007669"/>
    <property type="project" value="Ensembl"/>
</dbReference>
<dbReference type="GO" id="GO:0005886">
    <property type="term" value="C:plasma membrane"/>
    <property type="evidence" value="ECO:0000314"/>
    <property type="project" value="MGI"/>
</dbReference>
<dbReference type="GO" id="GO:0042383">
    <property type="term" value="C:sarcolemma"/>
    <property type="evidence" value="ECO:0007669"/>
    <property type="project" value="Ensembl"/>
</dbReference>
<dbReference type="GO" id="GO:0030141">
    <property type="term" value="C:secretory granule"/>
    <property type="evidence" value="ECO:0007669"/>
    <property type="project" value="Ensembl"/>
</dbReference>
<dbReference type="GO" id="GO:0019838">
    <property type="term" value="F:growth factor binding"/>
    <property type="evidence" value="ECO:0007669"/>
    <property type="project" value="Ensembl"/>
</dbReference>
<dbReference type="GO" id="GO:0016520">
    <property type="term" value="F:growth hormone-releasing hormone receptor activity"/>
    <property type="evidence" value="ECO:0000315"/>
    <property type="project" value="MGI"/>
</dbReference>
<dbReference type="GO" id="GO:0017046">
    <property type="term" value="F:peptide hormone binding"/>
    <property type="evidence" value="ECO:0000353"/>
    <property type="project" value="BHF-UCL"/>
</dbReference>
<dbReference type="GO" id="GO:0021984">
    <property type="term" value="P:adenohypophysis development"/>
    <property type="evidence" value="ECO:0000315"/>
    <property type="project" value="MGI"/>
</dbReference>
<dbReference type="GO" id="GO:0007189">
    <property type="term" value="P:adenylate cyclase-activating G protein-coupled receptor signaling pathway"/>
    <property type="evidence" value="ECO:0000315"/>
    <property type="project" value="MGI"/>
</dbReference>
<dbReference type="GO" id="GO:0141156">
    <property type="term" value="P:cAMP/PKA signal transduction"/>
    <property type="evidence" value="ECO:0007669"/>
    <property type="project" value="Ensembl"/>
</dbReference>
<dbReference type="GO" id="GO:0048469">
    <property type="term" value="P:cell maturation"/>
    <property type="evidence" value="ECO:0000315"/>
    <property type="project" value="MGI"/>
</dbReference>
<dbReference type="GO" id="GO:0007166">
    <property type="term" value="P:cell surface receptor signaling pathway"/>
    <property type="evidence" value="ECO:0007669"/>
    <property type="project" value="InterPro"/>
</dbReference>
<dbReference type="GO" id="GO:0071333">
    <property type="term" value="P:cellular response to glucose stimulus"/>
    <property type="evidence" value="ECO:0007669"/>
    <property type="project" value="Ensembl"/>
</dbReference>
<dbReference type="GO" id="GO:0032869">
    <property type="term" value="P:cellular response to insulin stimulus"/>
    <property type="evidence" value="ECO:0000314"/>
    <property type="project" value="MGI"/>
</dbReference>
<dbReference type="GO" id="GO:0008340">
    <property type="term" value="P:determination of adult lifespan"/>
    <property type="evidence" value="ECO:0000315"/>
    <property type="project" value="MGI"/>
</dbReference>
<dbReference type="GO" id="GO:0051649">
    <property type="term" value="P:establishment of localization in cell"/>
    <property type="evidence" value="ECO:0000315"/>
    <property type="project" value="MGI"/>
</dbReference>
<dbReference type="GO" id="GO:0030252">
    <property type="term" value="P:growth hormone secretion"/>
    <property type="evidence" value="ECO:0000315"/>
    <property type="project" value="MGI"/>
</dbReference>
<dbReference type="GO" id="GO:0042445">
    <property type="term" value="P:hormone metabolic process"/>
    <property type="evidence" value="ECO:0000315"/>
    <property type="project" value="MGI"/>
</dbReference>
<dbReference type="GO" id="GO:0046879">
    <property type="term" value="P:hormone secretion"/>
    <property type="evidence" value="ECO:0000315"/>
    <property type="project" value="MGI"/>
</dbReference>
<dbReference type="GO" id="GO:0007595">
    <property type="term" value="P:lactation"/>
    <property type="evidence" value="ECO:0000315"/>
    <property type="project" value="MGI"/>
</dbReference>
<dbReference type="GO" id="GO:0030879">
    <property type="term" value="P:mammary gland development"/>
    <property type="evidence" value="ECO:0000315"/>
    <property type="project" value="MGI"/>
</dbReference>
<dbReference type="GO" id="GO:0008284">
    <property type="term" value="P:positive regulation of cell population proliferation"/>
    <property type="evidence" value="ECO:0000315"/>
    <property type="project" value="BHF-UCL"/>
</dbReference>
<dbReference type="GO" id="GO:0046010">
    <property type="term" value="P:positive regulation of circadian sleep/wake cycle, non-REM sleep"/>
    <property type="evidence" value="ECO:0007669"/>
    <property type="project" value="Ensembl"/>
</dbReference>
<dbReference type="GO" id="GO:0060124">
    <property type="term" value="P:positive regulation of growth hormone secretion"/>
    <property type="evidence" value="ECO:0000315"/>
    <property type="project" value="MGI"/>
</dbReference>
<dbReference type="GO" id="GO:0046887">
    <property type="term" value="P:positive regulation of hormone secretion"/>
    <property type="evidence" value="ECO:0000315"/>
    <property type="project" value="MGI"/>
</dbReference>
<dbReference type="GO" id="GO:0040018">
    <property type="term" value="P:positive regulation of multicellular organism growth"/>
    <property type="evidence" value="ECO:0000315"/>
    <property type="project" value="MGI"/>
</dbReference>
<dbReference type="GO" id="GO:0043567">
    <property type="term" value="P:regulation of insulin-like growth factor receptor signaling pathway"/>
    <property type="evidence" value="ECO:0000315"/>
    <property type="project" value="MGI"/>
</dbReference>
<dbReference type="GO" id="GO:0033143">
    <property type="term" value="P:regulation of intracellular steroid hormone receptor signaling pathway"/>
    <property type="evidence" value="ECO:0000315"/>
    <property type="project" value="MGI"/>
</dbReference>
<dbReference type="GO" id="GO:0051246">
    <property type="term" value="P:regulation of protein metabolic process"/>
    <property type="evidence" value="ECO:0000316"/>
    <property type="project" value="MGI"/>
</dbReference>
<dbReference type="GO" id="GO:0043627">
    <property type="term" value="P:response to estrogen"/>
    <property type="evidence" value="ECO:0007669"/>
    <property type="project" value="Ensembl"/>
</dbReference>
<dbReference type="GO" id="GO:0051384">
    <property type="term" value="P:response to glucocorticoid"/>
    <property type="evidence" value="ECO:0007669"/>
    <property type="project" value="Ensembl"/>
</dbReference>
<dbReference type="GO" id="GO:0060133">
    <property type="term" value="P:somatotropin secreting cell development"/>
    <property type="evidence" value="ECO:0000315"/>
    <property type="project" value="MGI"/>
</dbReference>
<dbReference type="CDD" id="cd15270">
    <property type="entry name" value="7tmB1_GHRHR"/>
    <property type="match status" value="1"/>
</dbReference>
<dbReference type="FunFam" id="1.20.1070.10:FF:000114">
    <property type="entry name" value="Growth hormone releasing hormone receptor"/>
    <property type="match status" value="1"/>
</dbReference>
<dbReference type="FunFam" id="4.10.1240.10:FF:000014">
    <property type="entry name" value="Growth hormone-releasing hormone receptor 2"/>
    <property type="match status" value="1"/>
</dbReference>
<dbReference type="Gene3D" id="4.10.1240.10">
    <property type="entry name" value="GPCR, family 2, extracellular hormone receptor domain"/>
    <property type="match status" value="1"/>
</dbReference>
<dbReference type="Gene3D" id="1.20.1070.10">
    <property type="entry name" value="Rhodopsin 7-helix transmembrane proteins"/>
    <property type="match status" value="1"/>
</dbReference>
<dbReference type="InterPro" id="IPR050332">
    <property type="entry name" value="GPCR_2"/>
</dbReference>
<dbReference type="InterPro" id="IPR017981">
    <property type="entry name" value="GPCR_2-like_7TM"/>
</dbReference>
<dbReference type="InterPro" id="IPR036445">
    <property type="entry name" value="GPCR_2_extracell_dom_sf"/>
</dbReference>
<dbReference type="InterPro" id="IPR001879">
    <property type="entry name" value="GPCR_2_extracellular_dom"/>
</dbReference>
<dbReference type="InterPro" id="IPR003288">
    <property type="entry name" value="GPCR_2_GHRH_rcpt"/>
</dbReference>
<dbReference type="InterPro" id="IPR000832">
    <property type="entry name" value="GPCR_2_secretin-like"/>
</dbReference>
<dbReference type="InterPro" id="IPR017983">
    <property type="entry name" value="GPCR_2_secretin-like_CS"/>
</dbReference>
<dbReference type="PANTHER" id="PTHR45620:SF14">
    <property type="entry name" value="GROWTH HORMONE-RELEASING HORMONE RECEPTOR"/>
    <property type="match status" value="1"/>
</dbReference>
<dbReference type="PANTHER" id="PTHR45620">
    <property type="entry name" value="PDF RECEPTOR-LIKE PROTEIN-RELATED"/>
    <property type="match status" value="1"/>
</dbReference>
<dbReference type="Pfam" id="PF00002">
    <property type="entry name" value="7tm_2"/>
    <property type="match status" value="1"/>
</dbReference>
<dbReference type="Pfam" id="PF02793">
    <property type="entry name" value="HRM"/>
    <property type="match status" value="1"/>
</dbReference>
<dbReference type="PRINTS" id="PR01352">
    <property type="entry name" value="GHRHRECEPTOR"/>
</dbReference>
<dbReference type="PRINTS" id="PR00249">
    <property type="entry name" value="GPCRSECRETIN"/>
</dbReference>
<dbReference type="SMART" id="SM00008">
    <property type="entry name" value="HormR"/>
    <property type="match status" value="1"/>
</dbReference>
<dbReference type="SUPFAM" id="SSF81321">
    <property type="entry name" value="Family A G protein-coupled receptor-like"/>
    <property type="match status" value="1"/>
</dbReference>
<dbReference type="SUPFAM" id="SSF111418">
    <property type="entry name" value="Hormone receptor domain"/>
    <property type="match status" value="1"/>
</dbReference>
<dbReference type="PROSITE" id="PS00649">
    <property type="entry name" value="G_PROTEIN_RECEP_F2_1"/>
    <property type="match status" value="1"/>
</dbReference>
<dbReference type="PROSITE" id="PS00650">
    <property type="entry name" value="G_PROTEIN_RECEP_F2_2"/>
    <property type="match status" value="1"/>
</dbReference>
<dbReference type="PROSITE" id="PS50227">
    <property type="entry name" value="G_PROTEIN_RECEP_F2_3"/>
    <property type="match status" value="1"/>
</dbReference>
<dbReference type="PROSITE" id="PS50261">
    <property type="entry name" value="G_PROTEIN_RECEP_F2_4"/>
    <property type="match status" value="1"/>
</dbReference>
<sequence>MDGLMWATRILCLLSLCGVTLGHLHLECDFITQLRDDELACLQAAEGTNNTSLGCPGTWDGLLCWPPTGSGQWVSLPCPEFFSHFGSDTGFVKRDCTITGWSNPFPPYPVACPVPLELLTKEKSYFSTVKIIYTTGHSISIVALCVAIAILVALRRLHCPRNYIHTQLFATFILKASAVFLKDAAIFQGDSTDHCSMSTVLCKVSVAISHLATMTNFSWLLAEAVYLSCLLASTSPRSKPAFWWLVLAGWGLPVLCTGTWVGCKLAFEDTECWDLDNSSPCWWIIKGPIVLSVGVNFGLFLNIICILLRKLEPAQGGLHTRAQYWRLSKSTLLLIPLFGIHYIIFNFLPDSAGLDIRVPLELGLGSFQGFIVAVLYCFLNQEVRTEISRKWYGHDPELLPARRTCTEWTTPPRSRLKVLTSEC</sequence>
<protein>
    <recommendedName>
        <fullName>Growth hormone-releasing hormone receptor</fullName>
        <shortName>GHRH receptor</shortName>
    </recommendedName>
    <alternativeName>
        <fullName>Growth hormone-releasing factor receptor</fullName>
        <shortName>GRF receptor</shortName>
        <shortName>GRFR</shortName>
    </alternativeName>
</protein>
<gene>
    <name type="primary">Ghrhr</name>
    <name type="synonym">Grfr</name>
</gene>
<feature type="signal peptide" evidence="2">
    <location>
        <begin position="1"/>
        <end position="22"/>
    </location>
</feature>
<feature type="chain" id="PRO_0000012829" description="Growth hormone-releasing hormone receptor">
    <location>
        <begin position="23"/>
        <end position="423"/>
    </location>
</feature>
<feature type="topological domain" description="Extracellular" evidence="2">
    <location>
        <begin position="23"/>
        <end position="130"/>
    </location>
</feature>
<feature type="transmembrane region" description="Helical; Name=1" evidence="2">
    <location>
        <begin position="131"/>
        <end position="151"/>
    </location>
</feature>
<feature type="topological domain" description="Cytoplasmic" evidence="2">
    <location>
        <begin position="152"/>
        <end position="167"/>
    </location>
</feature>
<feature type="transmembrane region" description="Helical; Name=2" evidence="2">
    <location>
        <begin position="168"/>
        <end position="188"/>
    </location>
</feature>
<feature type="topological domain" description="Extracellular" evidence="2">
    <location>
        <begin position="189"/>
        <end position="210"/>
    </location>
</feature>
<feature type="transmembrane region" description="Helical; Name=3" evidence="2">
    <location>
        <begin position="211"/>
        <end position="231"/>
    </location>
</feature>
<feature type="topological domain" description="Cytoplasmic" evidence="2">
    <location>
        <begin position="232"/>
        <end position="240"/>
    </location>
</feature>
<feature type="transmembrane region" description="Helical; Name=4" evidence="2">
    <location>
        <begin position="241"/>
        <end position="261"/>
    </location>
</feature>
<feature type="topological domain" description="Extracellular" evidence="2">
    <location>
        <begin position="262"/>
        <end position="283"/>
    </location>
</feature>
<feature type="transmembrane region" description="Helical; Name=5" evidence="2">
    <location>
        <begin position="284"/>
        <end position="304"/>
    </location>
</feature>
<feature type="topological domain" description="Cytoplasmic" evidence="2">
    <location>
        <begin position="305"/>
        <end position="331"/>
    </location>
</feature>
<feature type="transmembrane region" description="Helical; Name=6" evidence="2">
    <location>
        <begin position="332"/>
        <end position="352"/>
    </location>
</feature>
<feature type="topological domain" description="Extracellular" evidence="2">
    <location>
        <begin position="353"/>
        <end position="357"/>
    </location>
</feature>
<feature type="transmembrane region" description="Helical; Name=7" evidence="2">
    <location>
        <begin position="358"/>
        <end position="378"/>
    </location>
</feature>
<feature type="topological domain" description="Cytoplasmic" evidence="2">
    <location>
        <begin position="379"/>
        <end position="423"/>
    </location>
</feature>
<feature type="glycosylation site" description="N-linked (GlcNAc...) asparagine" evidence="2">
    <location>
        <position position="49"/>
    </location>
</feature>
<feature type="glycosylation site" description="N-linked (GlcNAc...) asparagine" evidence="2">
    <location>
        <position position="50"/>
    </location>
</feature>
<feature type="disulfide bond" evidence="1">
    <location>
        <begin position="41"/>
        <end position="64"/>
    </location>
</feature>
<feature type="disulfide bond" evidence="1">
    <location>
        <begin position="55"/>
        <end position="96"/>
    </location>
</feature>
<feature type="disulfide bond" evidence="1">
    <location>
        <begin position="78"/>
        <end position="112"/>
    </location>
</feature>
<feature type="sequence variant" description="In lit." evidence="3">
    <original>D</original>
    <variation>G</variation>
    <location>
        <position position="60"/>
    </location>
</feature>
<feature type="sequence conflict" description="In Ref. 1; L07379." evidence="4" ref="1">
    <original>LA</original>
    <variation>HS</variation>
    <location>
        <begin position="265"/>
        <end position="266"/>
    </location>
</feature>
<organism>
    <name type="scientific">Mus musculus</name>
    <name type="common">Mouse</name>
    <dbReference type="NCBI Taxonomy" id="10090"/>
    <lineage>
        <taxon>Eukaryota</taxon>
        <taxon>Metazoa</taxon>
        <taxon>Chordata</taxon>
        <taxon>Craniata</taxon>
        <taxon>Vertebrata</taxon>
        <taxon>Euteleostomi</taxon>
        <taxon>Mammalia</taxon>
        <taxon>Eutheria</taxon>
        <taxon>Euarchontoglires</taxon>
        <taxon>Glires</taxon>
        <taxon>Rodentia</taxon>
        <taxon>Myomorpha</taxon>
        <taxon>Muroidea</taxon>
        <taxon>Muridae</taxon>
        <taxon>Murinae</taxon>
        <taxon>Mus</taxon>
        <taxon>Mus</taxon>
    </lineage>
</organism>
<reference key="1">
    <citation type="journal article" date="1992" name="Nature">
        <title>Pit-1-dependent expression of the receptor for growth hormone releasing factor mediates pituitary cell growth.</title>
        <authorList>
            <person name="Lin C.R."/>
            <person name="Lin S.-C."/>
            <person name="Chang C.P."/>
            <person name="Rosenfeld M.G."/>
        </authorList>
    </citation>
    <scope>NUCLEOTIDE SEQUENCE [MRNA]</scope>
</reference>
<reference key="2">
    <citation type="journal article" date="2004" name="Genome Res.">
        <title>The status, quality, and expansion of the NIH full-length cDNA project: the Mammalian Gene Collection (MGC).</title>
        <authorList>
            <consortium name="The MGC Project Team"/>
        </authorList>
    </citation>
    <scope>NUCLEOTIDE SEQUENCE [LARGE SCALE MRNA]</scope>
    <source>
        <tissue>Brain</tissue>
    </source>
</reference>
<reference key="3">
    <citation type="journal article" date="1993" name="Nature">
        <title>Molecular basis of the little mouse phenotype and implications for cell type-specific growth.</title>
        <authorList>
            <person name="Lin S.-C."/>
            <person name="Lin C.R."/>
            <person name="Gukovsky I."/>
            <person name="Lusis A.J."/>
            <person name="Sawchenko P.E."/>
            <person name="Rosenfeld M.G."/>
        </authorList>
    </citation>
    <scope>VARIANT LIT GLY-60</scope>
</reference>
<name>GHRHR_MOUSE</name>
<evidence type="ECO:0000250" key="1"/>
<evidence type="ECO:0000255" key="2"/>
<evidence type="ECO:0000269" key="3">
    <source>
    </source>
</evidence>
<evidence type="ECO:0000305" key="4"/>
<proteinExistence type="evidence at protein level"/>